<sequence length="115" mass="12524">MPVTQEEIIAGIAEIIEEVTGIEPSEITPEKSFVDDLDIDSLSMVEIAVQTEDKYGVKIPDEDLAGLRTVGDVVAYIQKLEEENPEAAQALRAKIESENPDAVANVQARLEAESK</sequence>
<comment type="function">
    <text evidence="1">Acyl carrier protein involved in meromycolate extension.</text>
</comment>
<comment type="subcellular location">
    <subcellularLocation>
        <location evidence="1">Cytoplasm</location>
    </subcellularLocation>
</comment>
<comment type="PTM">
    <text evidence="3">4'-phosphopantetheine is transferred from CoA to a specific serine of apo-AcpM.</text>
</comment>
<comment type="similarity">
    <text evidence="3">Belongs to the acyl carrier protein (ACP) family.</text>
</comment>
<proteinExistence type="inferred from homology"/>
<keyword id="KW-0963">Cytoplasm</keyword>
<keyword id="KW-0275">Fatty acid biosynthesis</keyword>
<keyword id="KW-0276">Fatty acid metabolism</keyword>
<keyword id="KW-0444">Lipid biosynthesis</keyword>
<keyword id="KW-0443">Lipid metabolism</keyword>
<keyword id="KW-0596">Phosphopantetheine</keyword>
<keyword id="KW-0597">Phosphoprotein</keyword>
<keyword id="KW-1185">Reference proteome</keyword>
<accession>P9WQF2</accession>
<accession>L0T917</accession>
<accession>P0A4W6</accession>
<accession>Q10500</accession>
<feature type="chain" id="PRO_0000426786" description="Meromycolate extension acyl carrier protein">
    <location>
        <begin position="1"/>
        <end position="115"/>
    </location>
</feature>
<feature type="domain" description="Carrier" evidence="2">
    <location>
        <begin position="3"/>
        <end position="81"/>
    </location>
</feature>
<feature type="modified residue" description="O-(pantetheine 4'-phosphoryl)serine" evidence="2">
    <location>
        <position position="41"/>
    </location>
</feature>
<organism>
    <name type="scientific">Mycobacterium tuberculosis (strain CDC 1551 / Oshkosh)</name>
    <dbReference type="NCBI Taxonomy" id="83331"/>
    <lineage>
        <taxon>Bacteria</taxon>
        <taxon>Bacillati</taxon>
        <taxon>Actinomycetota</taxon>
        <taxon>Actinomycetes</taxon>
        <taxon>Mycobacteriales</taxon>
        <taxon>Mycobacteriaceae</taxon>
        <taxon>Mycobacterium</taxon>
        <taxon>Mycobacterium tuberculosis complex</taxon>
    </lineage>
</organism>
<reference key="1">
    <citation type="journal article" date="2002" name="J. Bacteriol.">
        <title>Whole-genome comparison of Mycobacterium tuberculosis clinical and laboratory strains.</title>
        <authorList>
            <person name="Fleischmann R.D."/>
            <person name="Alland D."/>
            <person name="Eisen J.A."/>
            <person name="Carpenter L."/>
            <person name="White O."/>
            <person name="Peterson J.D."/>
            <person name="DeBoy R.T."/>
            <person name="Dodson R.J."/>
            <person name="Gwinn M.L."/>
            <person name="Haft D.H."/>
            <person name="Hickey E.K."/>
            <person name="Kolonay J.F."/>
            <person name="Nelson W.C."/>
            <person name="Umayam L.A."/>
            <person name="Ermolaeva M.D."/>
            <person name="Salzberg S.L."/>
            <person name="Delcher A."/>
            <person name="Utterback T.R."/>
            <person name="Weidman J.F."/>
            <person name="Khouri H.M."/>
            <person name="Gill J."/>
            <person name="Mikula A."/>
            <person name="Bishai W."/>
            <person name="Jacobs W.R. Jr."/>
            <person name="Venter J.C."/>
            <person name="Fraser C.M."/>
        </authorList>
    </citation>
    <scope>NUCLEOTIDE SEQUENCE [LARGE SCALE GENOMIC DNA]</scope>
    <source>
        <strain>CDC 1551 / Oshkosh</strain>
    </source>
</reference>
<dbReference type="EMBL" id="AE000516">
    <property type="protein sequence ID" value="AAK46588.1"/>
    <property type="molecule type" value="Genomic_DNA"/>
</dbReference>
<dbReference type="PIR" id="H70778">
    <property type="entry name" value="H70778"/>
</dbReference>
<dbReference type="RefSeq" id="WP_003411565.1">
    <property type="nucleotide sequence ID" value="NZ_KK341227.1"/>
</dbReference>
<dbReference type="SMR" id="P9WQF2"/>
<dbReference type="GeneID" id="45426224"/>
<dbReference type="KEGG" id="mtc:MT2304"/>
<dbReference type="PATRIC" id="fig|83331.31.peg.2481"/>
<dbReference type="HOGENOM" id="CLU_108696_5_6_11"/>
<dbReference type="Proteomes" id="UP000001020">
    <property type="component" value="Chromosome"/>
</dbReference>
<dbReference type="GO" id="GO:0005829">
    <property type="term" value="C:cytosol"/>
    <property type="evidence" value="ECO:0007669"/>
    <property type="project" value="TreeGrafter"/>
</dbReference>
<dbReference type="GO" id="GO:0016020">
    <property type="term" value="C:membrane"/>
    <property type="evidence" value="ECO:0007669"/>
    <property type="project" value="GOC"/>
</dbReference>
<dbReference type="GO" id="GO:0000035">
    <property type="term" value="F:acyl binding"/>
    <property type="evidence" value="ECO:0007669"/>
    <property type="project" value="TreeGrafter"/>
</dbReference>
<dbReference type="GO" id="GO:0000036">
    <property type="term" value="F:acyl carrier activity"/>
    <property type="evidence" value="ECO:0007669"/>
    <property type="project" value="UniProtKB-UniRule"/>
</dbReference>
<dbReference type="GO" id="GO:0009245">
    <property type="term" value="P:lipid A biosynthetic process"/>
    <property type="evidence" value="ECO:0007669"/>
    <property type="project" value="TreeGrafter"/>
</dbReference>
<dbReference type="FunFam" id="1.10.1200.10:FF:000010">
    <property type="entry name" value="Acyl carrier protein"/>
    <property type="match status" value="1"/>
</dbReference>
<dbReference type="Gene3D" id="1.10.1200.10">
    <property type="entry name" value="ACP-like"/>
    <property type="match status" value="1"/>
</dbReference>
<dbReference type="HAMAP" id="MF_01217">
    <property type="entry name" value="Acyl_carrier"/>
    <property type="match status" value="1"/>
</dbReference>
<dbReference type="InterPro" id="IPR003231">
    <property type="entry name" value="ACP"/>
</dbReference>
<dbReference type="InterPro" id="IPR036736">
    <property type="entry name" value="ACP-like_sf"/>
</dbReference>
<dbReference type="InterPro" id="IPR053393">
    <property type="entry name" value="Meromycolate-ACP"/>
</dbReference>
<dbReference type="InterPro" id="IPR009081">
    <property type="entry name" value="PP-bd_ACP"/>
</dbReference>
<dbReference type="NCBIfam" id="NF040636">
    <property type="entry name" value="AcpM"/>
    <property type="match status" value="1"/>
</dbReference>
<dbReference type="NCBIfam" id="NF002147">
    <property type="entry name" value="PRK00982.1-1"/>
    <property type="match status" value="1"/>
</dbReference>
<dbReference type="NCBIfam" id="NF002148">
    <property type="entry name" value="PRK00982.1-2"/>
    <property type="match status" value="1"/>
</dbReference>
<dbReference type="NCBIfam" id="NF002150">
    <property type="entry name" value="PRK00982.1-4"/>
    <property type="match status" value="1"/>
</dbReference>
<dbReference type="PANTHER" id="PTHR20863">
    <property type="entry name" value="ACYL CARRIER PROTEIN"/>
    <property type="match status" value="1"/>
</dbReference>
<dbReference type="PANTHER" id="PTHR20863:SF76">
    <property type="entry name" value="CARRIER DOMAIN-CONTAINING PROTEIN"/>
    <property type="match status" value="1"/>
</dbReference>
<dbReference type="Pfam" id="PF00550">
    <property type="entry name" value="PP-binding"/>
    <property type="match status" value="1"/>
</dbReference>
<dbReference type="SUPFAM" id="SSF47336">
    <property type="entry name" value="ACP-like"/>
    <property type="match status" value="1"/>
</dbReference>
<dbReference type="PROSITE" id="PS50075">
    <property type="entry name" value="CARRIER"/>
    <property type="match status" value="1"/>
</dbReference>
<gene>
    <name type="primary">acpM</name>
    <name type="ordered locus">MT2304</name>
</gene>
<evidence type="ECO:0000250" key="1"/>
<evidence type="ECO:0000255" key="2">
    <source>
        <dbReference type="PROSITE-ProRule" id="PRU00258"/>
    </source>
</evidence>
<evidence type="ECO:0000305" key="3"/>
<name>ACPM_MYCTO</name>
<protein>
    <recommendedName>
        <fullName>Meromycolate extension acyl carrier protein</fullName>
        <shortName>ACP</shortName>
    </recommendedName>
</protein>